<dbReference type="EMBL" id="U00096">
    <property type="protein sequence ID" value="AAC74045.1"/>
    <property type="molecule type" value="Genomic_DNA"/>
</dbReference>
<dbReference type="EMBL" id="AP009048">
    <property type="protein sequence ID" value="BAA35717.1"/>
    <property type="molecule type" value="Genomic_DNA"/>
</dbReference>
<dbReference type="PIR" id="F64836">
    <property type="entry name" value="F64836"/>
</dbReference>
<dbReference type="RefSeq" id="NP_415479.1">
    <property type="nucleotide sequence ID" value="NC_000913.3"/>
</dbReference>
<dbReference type="RefSeq" id="WP_000839153.1">
    <property type="nucleotide sequence ID" value="NZ_STEB01000006.1"/>
</dbReference>
<dbReference type="SMR" id="P75869"/>
<dbReference type="BioGRID" id="4263154">
    <property type="interactions" value="16"/>
</dbReference>
<dbReference type="BioGRID" id="850853">
    <property type="interactions" value="1"/>
</dbReference>
<dbReference type="DIP" id="DIP-11497N"/>
<dbReference type="FunCoup" id="P75869">
    <property type="interactions" value="82"/>
</dbReference>
<dbReference type="IntAct" id="P75869">
    <property type="interactions" value="12"/>
</dbReference>
<dbReference type="STRING" id="511145.b0959"/>
<dbReference type="PaxDb" id="511145-b0959"/>
<dbReference type="EnsemblBacteria" id="AAC74045">
    <property type="protein sequence ID" value="AAC74045"/>
    <property type="gene ID" value="b0959"/>
</dbReference>
<dbReference type="GeneID" id="93776455"/>
<dbReference type="GeneID" id="946504"/>
<dbReference type="KEGG" id="ecj:JW0942"/>
<dbReference type="KEGG" id="eco:b0959"/>
<dbReference type="KEGG" id="ecoc:C3026_05865"/>
<dbReference type="PATRIC" id="fig|1411691.4.peg.1315"/>
<dbReference type="EchoBASE" id="EB3484"/>
<dbReference type="eggNOG" id="COG3070">
    <property type="taxonomic scope" value="Bacteria"/>
</dbReference>
<dbReference type="HOGENOM" id="CLU_094990_0_0_6"/>
<dbReference type="InParanoid" id="P75869"/>
<dbReference type="OMA" id="WYKNNAV"/>
<dbReference type="OrthoDB" id="4225809at2"/>
<dbReference type="PhylomeDB" id="P75869"/>
<dbReference type="BioCyc" id="EcoCyc:G6494-MONOMER"/>
<dbReference type="PRO" id="PR:P75869"/>
<dbReference type="Proteomes" id="UP000000625">
    <property type="component" value="Chromosome"/>
</dbReference>
<dbReference type="GO" id="GO:0009290">
    <property type="term" value="P:DNA import into cell involved in transformation"/>
    <property type="evidence" value="ECO:0000314"/>
    <property type="project" value="UniProtKB"/>
</dbReference>
<dbReference type="GO" id="GO:0030420">
    <property type="term" value="P:establishment of competence for transformation"/>
    <property type="evidence" value="ECO:0007669"/>
    <property type="project" value="UniProtKB-KW"/>
</dbReference>
<dbReference type="GO" id="GO:1903658">
    <property type="term" value="P:positive regulation of type IV pilus biogenesis"/>
    <property type="evidence" value="ECO:0000314"/>
    <property type="project" value="UniProtKB"/>
</dbReference>
<dbReference type="GO" id="GO:0006355">
    <property type="term" value="P:regulation of DNA-templated transcription"/>
    <property type="evidence" value="ECO:0000318"/>
    <property type="project" value="GO_Central"/>
</dbReference>
<dbReference type="FunFam" id="3.30.1460.30:FF:000001">
    <property type="entry name" value="TfoX family protein"/>
    <property type="match status" value="1"/>
</dbReference>
<dbReference type="Gene3D" id="1.10.150.20">
    <property type="entry name" value="5' to 3' exonuclease, C-terminal subdomain"/>
    <property type="match status" value="1"/>
</dbReference>
<dbReference type="Gene3D" id="3.30.1460.30">
    <property type="entry name" value="YgaC/TfoX-N like chaperone"/>
    <property type="match status" value="1"/>
</dbReference>
<dbReference type="InterPro" id="IPR047525">
    <property type="entry name" value="TfoX-like"/>
</dbReference>
<dbReference type="InterPro" id="IPR026256">
    <property type="entry name" value="TfoX-like_gammaprotbact"/>
</dbReference>
<dbReference type="InterPro" id="IPR007077">
    <property type="entry name" value="TfoX_C"/>
</dbReference>
<dbReference type="InterPro" id="IPR007076">
    <property type="entry name" value="TfoX_N"/>
</dbReference>
<dbReference type="PANTHER" id="PTHR36121">
    <property type="entry name" value="PROTEIN SXY"/>
    <property type="match status" value="1"/>
</dbReference>
<dbReference type="PANTHER" id="PTHR36121:SF1">
    <property type="entry name" value="PROTEIN SXY"/>
    <property type="match status" value="1"/>
</dbReference>
<dbReference type="Pfam" id="PF04994">
    <property type="entry name" value="TfoX_C"/>
    <property type="match status" value="1"/>
</dbReference>
<dbReference type="Pfam" id="PF04993">
    <property type="entry name" value="TfoX_N"/>
    <property type="match status" value="1"/>
</dbReference>
<dbReference type="PIRSF" id="PIRSF028788">
    <property type="entry name" value="TfoX_Sxy"/>
    <property type="match status" value="1"/>
</dbReference>
<dbReference type="SUPFAM" id="SSF159894">
    <property type="entry name" value="YgaC/TfoX-N like"/>
    <property type="match status" value="1"/>
</dbReference>
<proteinExistence type="evidence at protein level"/>
<gene>
    <name evidence="5" type="primary">sxy</name>
    <name evidence="6" type="synonym">tfoX</name>
    <name type="synonym">yccR</name>
    <name type="ordered locus">b0959</name>
    <name type="ordered locus">JW0942</name>
</gene>
<feature type="chain" id="PRO_0000168792" description="Protein Sxy">
    <location>
        <begin position="1"/>
        <end position="209"/>
    </location>
</feature>
<organism>
    <name type="scientific">Escherichia coli (strain K12)</name>
    <dbReference type="NCBI Taxonomy" id="83333"/>
    <lineage>
        <taxon>Bacteria</taxon>
        <taxon>Pseudomonadati</taxon>
        <taxon>Pseudomonadota</taxon>
        <taxon>Gammaproteobacteria</taxon>
        <taxon>Enterobacterales</taxon>
        <taxon>Enterobacteriaceae</taxon>
        <taxon>Escherichia</taxon>
    </lineage>
</organism>
<protein>
    <recommendedName>
        <fullName evidence="5">Protein Sxy</fullName>
    </recommendedName>
    <alternativeName>
        <fullName evidence="7">Competence activator Sxy</fullName>
    </alternativeName>
</protein>
<keyword id="KW-0010">Activator</keyword>
<keyword id="KW-0178">Competence</keyword>
<keyword id="KW-1185">Reference proteome</keyword>
<keyword id="KW-0804">Transcription</keyword>
<keyword id="KW-0805">Transcription regulation</keyword>
<sequence length="209" mass="24147">MKSLSYKRIYKSQEYLATLGTIEYRSLFGSYSLTVDDTVFAMVSDGELYLRACEQSAQYCVKHPPVWLTYKKCGRSVTLNYYRVDESLWRNQLKLVRLSKYSLDAALKEKSTRNTRERLKDLPNMSFHLEAILGEVGIKDVRALRILGAKMCWLRLRQQNSLVTEKILFMLEGAIIGIHEAALPVARRQELAEWADSLTPKQEFPAELE</sequence>
<name>SXY_ECOLI</name>
<reference key="1">
    <citation type="journal article" date="1996" name="DNA Res.">
        <title>A 718-kb DNA sequence of the Escherichia coli K-12 genome corresponding to the 12.7-28.0 min region on the linkage map.</title>
        <authorList>
            <person name="Oshima T."/>
            <person name="Aiba H."/>
            <person name="Baba T."/>
            <person name="Fujita K."/>
            <person name="Hayashi K."/>
            <person name="Honjo A."/>
            <person name="Ikemoto K."/>
            <person name="Inada T."/>
            <person name="Itoh T."/>
            <person name="Kajihara M."/>
            <person name="Kanai K."/>
            <person name="Kashimoto K."/>
            <person name="Kimura S."/>
            <person name="Kitagawa M."/>
            <person name="Makino K."/>
            <person name="Masuda S."/>
            <person name="Miki T."/>
            <person name="Mizobuchi K."/>
            <person name="Mori H."/>
            <person name="Motomura K."/>
            <person name="Nakamura Y."/>
            <person name="Nashimoto H."/>
            <person name="Nishio Y."/>
            <person name="Saito N."/>
            <person name="Sampei G."/>
            <person name="Seki Y."/>
            <person name="Tagami H."/>
            <person name="Takemoto K."/>
            <person name="Wada C."/>
            <person name="Yamamoto Y."/>
            <person name="Yano M."/>
            <person name="Horiuchi T."/>
        </authorList>
    </citation>
    <scope>NUCLEOTIDE SEQUENCE [LARGE SCALE GENOMIC DNA]</scope>
    <source>
        <strain>K12 / W3110 / ATCC 27325 / DSM 5911</strain>
    </source>
</reference>
<reference key="2">
    <citation type="journal article" date="1997" name="Science">
        <title>The complete genome sequence of Escherichia coli K-12.</title>
        <authorList>
            <person name="Blattner F.R."/>
            <person name="Plunkett G. III"/>
            <person name="Bloch C.A."/>
            <person name="Perna N.T."/>
            <person name="Burland V."/>
            <person name="Riley M."/>
            <person name="Collado-Vides J."/>
            <person name="Glasner J.D."/>
            <person name="Rode C.K."/>
            <person name="Mayhew G.F."/>
            <person name="Gregor J."/>
            <person name="Davis N.W."/>
            <person name="Kirkpatrick H.A."/>
            <person name="Goeden M.A."/>
            <person name="Rose D.J."/>
            <person name="Mau B."/>
            <person name="Shao Y."/>
        </authorList>
    </citation>
    <scope>NUCLEOTIDE SEQUENCE [LARGE SCALE GENOMIC DNA]</scope>
    <source>
        <strain>K12 / MG1655 / ATCC 47076</strain>
    </source>
</reference>
<reference key="3">
    <citation type="journal article" date="2006" name="Mol. Syst. Biol.">
        <title>Highly accurate genome sequences of Escherichia coli K-12 strains MG1655 and W3110.</title>
        <authorList>
            <person name="Hayashi K."/>
            <person name="Morooka N."/>
            <person name="Yamamoto Y."/>
            <person name="Fujita K."/>
            <person name="Isono K."/>
            <person name="Choi S."/>
            <person name="Ohtsubo E."/>
            <person name="Baba T."/>
            <person name="Wanner B.L."/>
            <person name="Mori H."/>
            <person name="Horiuchi T."/>
        </authorList>
    </citation>
    <scope>NUCLEOTIDE SEQUENCE [LARGE SCALE GENOMIC DNA]</scope>
    <source>
        <strain>K12 / W3110 / ATCC 27325 / DSM 5911</strain>
    </source>
</reference>
<reference key="4">
    <citation type="journal article" date="2006" name="Nucleic Acids Res.">
        <title>Non-canonical CRP sites control competence regulons in Escherichia coli and many other gamma-proteobacteria.</title>
        <authorList>
            <person name="Cameron A.D."/>
            <person name="Redfield R.J."/>
        </authorList>
    </citation>
    <scope>FUNCTION</scope>
</reference>
<reference key="5">
    <citation type="journal article" date="2009" name="J. Bacteriol.">
        <title>Sxy induces a CRP-S regulon in Escherichia coli.</title>
        <authorList>
            <person name="Sinha S."/>
            <person name="Cameron A.D."/>
            <person name="Redfield R.J."/>
        </authorList>
    </citation>
    <scope>FUNCTION</scope>
    <scope>DISRUPTION PHENOTYPE</scope>
</reference>
<reference key="6">
    <citation type="journal article" date="2012" name="PLoS ONE">
        <title>Natural DNA uptake by Escherichia coli.</title>
        <authorList>
            <person name="Sinha S."/>
            <person name="Redfield R.J."/>
        </authorList>
    </citation>
    <scope>FUNCTION</scope>
</reference>
<reference key="7">
    <citation type="journal article" date="2015" name="Mol. Microbiol.">
        <title>CRP-dependent positive autoregulation and proteolytic degradation regulate competence activator Sxy of Escherichia coli.</title>
        <authorList>
            <person name="Jaskolska M."/>
            <person name="Gerdes K."/>
        </authorList>
    </citation>
    <scope>INDUCTION</scope>
    <source>
        <strain evidence="7">K12 / MG1655 / ATCC 47076</strain>
    </source>
</reference>
<evidence type="ECO:0000269" key="1">
    <source>
    </source>
</evidence>
<evidence type="ECO:0000269" key="2">
    <source>
    </source>
</evidence>
<evidence type="ECO:0000269" key="3">
    <source>
    </source>
</evidence>
<evidence type="ECO:0000269" key="4">
    <source>
    </source>
</evidence>
<evidence type="ECO:0000303" key="5">
    <source>
    </source>
</evidence>
<evidence type="ECO:0000303" key="6">
    <source>
    </source>
</evidence>
<evidence type="ECO:0000303" key="7">
    <source>
    </source>
</evidence>
<evidence type="ECO:0000305" key="8"/>
<accession>P75869</accession>
<comment type="function">
    <text evidence="1 2 3">Induces low levels of natural DNA uptake by inducing transcription of the competence genes (the CRP-S regulon) required for DNA transformation. Induction of the CRP-S regulon also requires Sxy-activated promoter (CRP-S), cAMP receptor protein (CRP) and cAMP (PubMed:17068078, PubMed:22532864). Induces CRP-S site-containing genes which are involved in genome maintenance and transcription or encoding transposases and toxin-antitoxin pairs (PubMed:19502395).</text>
</comment>
<comment type="interaction">
    <interactant intactId="EBI-544452">
        <id>P75869</id>
    </interactant>
    <interactant intactId="EBI-544459">
        <id>P75960</id>
        <label>cobB</label>
    </interactant>
    <organismsDiffer>false</organismsDiffer>
    <experiments>9</experiments>
</comment>
<comment type="interaction">
    <interactant intactId="EBI-544452">
        <id>P75869</id>
    </interactant>
    <interactant intactId="EBI-544466">
        <id>P42184</id>
        <label>prsA</label>
    </interactant>
    <organismsDiffer>true</organismsDiffer>
    <experiments>2</experiments>
</comment>
<comment type="induction">
    <text evidence="4">Not expressed by conditions that usually induce expression in other bacteria, such as amino acid starvation, antibiotics or addition of chitin. Induces its own transcription by a mechanism that requires CRP, cAMP and CRP-S site in its promoter. Negatively regulated at the post-translational level via degradation by Lon protease.</text>
</comment>
<comment type="disruption phenotype">
    <text evidence="2">Reduces both natural plasmid transformation and competitive fitness in long-term culture.</text>
</comment>
<comment type="miscellaneous">
    <text evidence="2 4">Overproduction induces the expression of the competence regulon genes including ppdA, hofB and ssb, although to highly varying degrees (PubMed:25491382). Plasmid-borne expression leads to production of type IV pilin (T4P), the main subunit of the DNA uptake machinery (PubMed:19502395).</text>
</comment>
<comment type="similarity">
    <text evidence="8">Belongs to the Sxy/TfoX family.</text>
</comment>